<evidence type="ECO:0000250" key="1"/>
<evidence type="ECO:0000255" key="2"/>
<evidence type="ECO:0000305" key="3"/>
<name>YELL_DROMD</name>
<feature type="signal peptide" evidence="2">
    <location>
        <begin position="1"/>
        <end position="28"/>
    </location>
</feature>
<feature type="chain" id="PRO_0000031050" description="Protein yellow">
    <location>
        <begin position="29"/>
        <end position="568"/>
    </location>
</feature>
<feature type="glycosylation site" description="N-linked (GlcNAc...) asparagine" evidence="2">
    <location>
        <position position="151"/>
    </location>
</feature>
<feature type="glycosylation site" description="N-linked (GlcNAc...) asparagine" evidence="2">
    <location>
        <position position="222"/>
    </location>
</feature>
<protein>
    <recommendedName>
        <fullName>Protein yellow</fullName>
    </recommendedName>
</protein>
<sequence>MHAQDKGGILPALSLLLIAVAMVSPSQAAYKLQERYSWNQLDFAFPNARLKEQALASGDYIPTNALPVGVEHFGNRLFVTVPRWRDGIPATLTYINMDHSVTGSPELIPYPDWRANTAGDCANSITTAYRIKVDECGRLWVLDTGTVGIGNTTTNPCPYAINIFDLTTNTRIRRYELPAADTNPNTFIANIAVDIGKNCDDAFAYFADELGYGLISYSWELNKSWRFSAHSYFFPDPLRGDFNVAGINFQWGEEGIFGMSLTPIRSDGYRTLYFSPLASHRQFAVSTRILRDETRTEDSYHDFVALDERGPNAHTTSRVMSDDGVELFNLIDQNAVGCWHSSMPYSPQSHGIVDRDDVGLVFPADVKIDENKNVWVLSDRMPVFLLSDLDYSDTNFRIYTAPLATLIENTVCDLRNNAYGPPNTVSIPKQAAPGHSAVGPPLYTTTNQYRSLLSQKPQTSWGPSLPSRNYLPALNGNPGIPGSRNNLNNLGAPGQVVSSVSVSTNTVGPSGIEVPKAYVFNQHNGLNYETSGPHLFPTLQPAPSQLGGGLKTYVNARQSGWWLHQQQG</sequence>
<organism>
    <name type="scientific">Drosophila madeirensis</name>
    <name type="common">Fruit fly</name>
    <dbReference type="NCBI Taxonomy" id="30013"/>
    <lineage>
        <taxon>Eukaryota</taxon>
        <taxon>Metazoa</taxon>
        <taxon>Ecdysozoa</taxon>
        <taxon>Arthropoda</taxon>
        <taxon>Hexapoda</taxon>
        <taxon>Insecta</taxon>
        <taxon>Pterygota</taxon>
        <taxon>Neoptera</taxon>
        <taxon>Endopterygota</taxon>
        <taxon>Diptera</taxon>
        <taxon>Brachycera</taxon>
        <taxon>Muscomorpha</taxon>
        <taxon>Ephydroidea</taxon>
        <taxon>Drosophilidae</taxon>
        <taxon>Drosophila</taxon>
        <taxon>Sophophora</taxon>
    </lineage>
</organism>
<dbReference type="EMBL" id="AJ289812">
    <property type="protein sequence ID" value="CAC16187.1"/>
    <property type="molecule type" value="Genomic_DNA"/>
</dbReference>
<dbReference type="SMR" id="Q9GP71"/>
<dbReference type="GlyCosmos" id="Q9GP71">
    <property type="glycosylation" value="2 sites, No reported glycans"/>
</dbReference>
<dbReference type="GO" id="GO:0005576">
    <property type="term" value="C:extracellular region"/>
    <property type="evidence" value="ECO:0007669"/>
    <property type="project" value="UniProtKB-SubCell"/>
</dbReference>
<dbReference type="FunFam" id="2.120.10.30:FF:000046">
    <property type="entry name" value="Blast:Protein yellow"/>
    <property type="match status" value="1"/>
</dbReference>
<dbReference type="Gene3D" id="2.120.10.30">
    <property type="entry name" value="TolB, C-terminal domain"/>
    <property type="match status" value="1"/>
</dbReference>
<dbReference type="InterPro" id="IPR011042">
    <property type="entry name" value="6-blade_b-propeller_TolB-like"/>
</dbReference>
<dbReference type="InterPro" id="IPR017996">
    <property type="entry name" value="Royal_jelly/protein_yellow"/>
</dbReference>
<dbReference type="PANTHER" id="PTHR10009:SF14">
    <property type="entry name" value="PROTEIN YELLOW"/>
    <property type="match status" value="1"/>
</dbReference>
<dbReference type="PANTHER" id="PTHR10009">
    <property type="entry name" value="PROTEIN YELLOW-RELATED"/>
    <property type="match status" value="1"/>
</dbReference>
<dbReference type="Pfam" id="PF03022">
    <property type="entry name" value="MRJP"/>
    <property type="match status" value="1"/>
</dbReference>
<dbReference type="PRINTS" id="PR01366">
    <property type="entry name" value="ROYALJELLY"/>
</dbReference>
<proteinExistence type="inferred from homology"/>
<comment type="function">
    <text evidence="1">Controls the pigmentation pattern of the adult cuticle and larval mouth parts.</text>
</comment>
<comment type="subcellular location">
    <subcellularLocation>
        <location>Secreted</location>
    </subcellularLocation>
</comment>
<comment type="similarity">
    <text evidence="3">Belongs to the major royal jelly protein family.</text>
</comment>
<reference key="1">
    <citation type="journal article" date="2001" name="Mol. Biol. Evol.">
        <title>Changes in the recombinational environment affect divergence in the yellow gene of Drosophila.</title>
        <authorList>
            <person name="Munte A.B."/>
            <person name="Aguade M."/>
            <person name="Segarra C."/>
        </authorList>
    </citation>
    <scope>NUCLEOTIDE SEQUENCE [GENOMIC DNA]</scope>
    <source>
        <strain>Am1</strain>
    </source>
</reference>
<accession>Q9GP71</accession>
<gene>
    <name type="primary">y</name>
</gene>
<keyword id="KW-0217">Developmental protein</keyword>
<keyword id="KW-0325">Glycoprotein</keyword>
<keyword id="KW-0964">Secreted</keyword>
<keyword id="KW-0732">Signal</keyword>